<organism>
    <name type="scientific">Staphylococcus aureus (strain N315)</name>
    <dbReference type="NCBI Taxonomy" id="158879"/>
    <lineage>
        <taxon>Bacteria</taxon>
        <taxon>Bacillati</taxon>
        <taxon>Bacillota</taxon>
        <taxon>Bacilli</taxon>
        <taxon>Bacillales</taxon>
        <taxon>Staphylococcaceae</taxon>
        <taxon>Staphylococcus</taxon>
    </lineage>
</organism>
<gene>
    <name evidence="1" type="primary">rplN</name>
    <name type="ordered locus">SA2037</name>
</gene>
<feature type="chain" id="PRO_0000224014" description="Large ribosomal subunit protein uL14">
    <location>
        <begin position="1"/>
        <end position="122"/>
    </location>
</feature>
<name>RL14_STAAN</name>
<accession>Q7A463</accession>
<dbReference type="EMBL" id="BA000018">
    <property type="protein sequence ID" value="BAB43332.1"/>
    <property type="molecule type" value="Genomic_DNA"/>
</dbReference>
<dbReference type="PIR" id="C90021">
    <property type="entry name" value="C90021"/>
</dbReference>
<dbReference type="RefSeq" id="WP_000615921.1">
    <property type="nucleotide sequence ID" value="NC_002745.2"/>
</dbReference>
<dbReference type="SMR" id="Q7A463"/>
<dbReference type="EnsemblBacteria" id="BAB43332">
    <property type="protein sequence ID" value="BAB43332"/>
    <property type="gene ID" value="BAB43332"/>
</dbReference>
<dbReference type="GeneID" id="98346552"/>
<dbReference type="KEGG" id="sau:SA2037"/>
<dbReference type="HOGENOM" id="CLU_095071_2_1_9"/>
<dbReference type="GO" id="GO:0022625">
    <property type="term" value="C:cytosolic large ribosomal subunit"/>
    <property type="evidence" value="ECO:0007669"/>
    <property type="project" value="TreeGrafter"/>
</dbReference>
<dbReference type="GO" id="GO:0070180">
    <property type="term" value="F:large ribosomal subunit rRNA binding"/>
    <property type="evidence" value="ECO:0007669"/>
    <property type="project" value="TreeGrafter"/>
</dbReference>
<dbReference type="GO" id="GO:0003735">
    <property type="term" value="F:structural constituent of ribosome"/>
    <property type="evidence" value="ECO:0007669"/>
    <property type="project" value="InterPro"/>
</dbReference>
<dbReference type="GO" id="GO:0006412">
    <property type="term" value="P:translation"/>
    <property type="evidence" value="ECO:0007669"/>
    <property type="project" value="UniProtKB-UniRule"/>
</dbReference>
<dbReference type="CDD" id="cd00337">
    <property type="entry name" value="Ribosomal_uL14"/>
    <property type="match status" value="1"/>
</dbReference>
<dbReference type="FunFam" id="2.40.150.20:FF:000001">
    <property type="entry name" value="50S ribosomal protein L14"/>
    <property type="match status" value="1"/>
</dbReference>
<dbReference type="Gene3D" id="2.40.150.20">
    <property type="entry name" value="Ribosomal protein L14"/>
    <property type="match status" value="1"/>
</dbReference>
<dbReference type="HAMAP" id="MF_01367">
    <property type="entry name" value="Ribosomal_uL14"/>
    <property type="match status" value="1"/>
</dbReference>
<dbReference type="InterPro" id="IPR000218">
    <property type="entry name" value="Ribosomal_uL14"/>
</dbReference>
<dbReference type="InterPro" id="IPR005745">
    <property type="entry name" value="Ribosomal_uL14_bac-type"/>
</dbReference>
<dbReference type="InterPro" id="IPR019972">
    <property type="entry name" value="Ribosomal_uL14_CS"/>
</dbReference>
<dbReference type="InterPro" id="IPR036853">
    <property type="entry name" value="Ribosomal_uL14_sf"/>
</dbReference>
<dbReference type="NCBIfam" id="TIGR01067">
    <property type="entry name" value="rplN_bact"/>
    <property type="match status" value="1"/>
</dbReference>
<dbReference type="PANTHER" id="PTHR11761">
    <property type="entry name" value="50S/60S RIBOSOMAL PROTEIN L14/L23"/>
    <property type="match status" value="1"/>
</dbReference>
<dbReference type="PANTHER" id="PTHR11761:SF3">
    <property type="entry name" value="LARGE RIBOSOMAL SUBUNIT PROTEIN UL14M"/>
    <property type="match status" value="1"/>
</dbReference>
<dbReference type="Pfam" id="PF00238">
    <property type="entry name" value="Ribosomal_L14"/>
    <property type="match status" value="1"/>
</dbReference>
<dbReference type="SMART" id="SM01374">
    <property type="entry name" value="Ribosomal_L14"/>
    <property type="match status" value="1"/>
</dbReference>
<dbReference type="SUPFAM" id="SSF50193">
    <property type="entry name" value="Ribosomal protein L14"/>
    <property type="match status" value="1"/>
</dbReference>
<dbReference type="PROSITE" id="PS00049">
    <property type="entry name" value="RIBOSOMAL_L14"/>
    <property type="match status" value="1"/>
</dbReference>
<sequence>MIQQETRLKVADNSGAREVLTIKVLGGSGRKTANIGDVIVCTVKNATPGGVVKKGDVVKAVIVRTKSGVRRNDGSYIKFDENACVIIRDDKGPRGTRIFGPVARELREGNFMKIVSLAPEVL</sequence>
<proteinExistence type="evidence at protein level"/>
<keyword id="KW-0687">Ribonucleoprotein</keyword>
<keyword id="KW-0689">Ribosomal protein</keyword>
<keyword id="KW-0694">RNA-binding</keyword>
<keyword id="KW-0699">rRNA-binding</keyword>
<protein>
    <recommendedName>
        <fullName evidence="1">Large ribosomal subunit protein uL14</fullName>
    </recommendedName>
    <alternativeName>
        <fullName evidence="2">50S ribosomal protein L14</fullName>
    </alternativeName>
</protein>
<comment type="function">
    <text evidence="1">Binds to 23S rRNA. Forms part of two intersubunit bridges in the 70S ribosome.</text>
</comment>
<comment type="subunit">
    <text evidence="1">Part of the 50S ribosomal subunit. Forms a cluster with proteins L3 and L19. In the 70S ribosome, L14 and L19 interact and together make contacts with the 16S rRNA in bridges B5 and B8.</text>
</comment>
<comment type="similarity">
    <text evidence="1">Belongs to the universal ribosomal protein uL14 family.</text>
</comment>
<evidence type="ECO:0000255" key="1">
    <source>
        <dbReference type="HAMAP-Rule" id="MF_01367"/>
    </source>
</evidence>
<evidence type="ECO:0000305" key="2"/>
<reference key="1">
    <citation type="journal article" date="2001" name="Lancet">
        <title>Whole genome sequencing of meticillin-resistant Staphylococcus aureus.</title>
        <authorList>
            <person name="Kuroda M."/>
            <person name="Ohta T."/>
            <person name="Uchiyama I."/>
            <person name="Baba T."/>
            <person name="Yuzawa H."/>
            <person name="Kobayashi I."/>
            <person name="Cui L."/>
            <person name="Oguchi A."/>
            <person name="Aoki K."/>
            <person name="Nagai Y."/>
            <person name="Lian J.-Q."/>
            <person name="Ito T."/>
            <person name="Kanamori M."/>
            <person name="Matsumaru H."/>
            <person name="Maruyama A."/>
            <person name="Murakami H."/>
            <person name="Hosoyama A."/>
            <person name="Mizutani-Ui Y."/>
            <person name="Takahashi N.K."/>
            <person name="Sawano T."/>
            <person name="Inoue R."/>
            <person name="Kaito C."/>
            <person name="Sekimizu K."/>
            <person name="Hirakawa H."/>
            <person name="Kuhara S."/>
            <person name="Goto S."/>
            <person name="Yabuzaki J."/>
            <person name="Kanehisa M."/>
            <person name="Yamashita A."/>
            <person name="Oshima K."/>
            <person name="Furuya K."/>
            <person name="Yoshino C."/>
            <person name="Shiba T."/>
            <person name="Hattori M."/>
            <person name="Ogasawara N."/>
            <person name="Hayashi H."/>
            <person name="Hiramatsu K."/>
        </authorList>
    </citation>
    <scope>NUCLEOTIDE SEQUENCE [LARGE SCALE GENOMIC DNA]</scope>
    <source>
        <strain>N315</strain>
    </source>
</reference>
<reference key="2">
    <citation type="submission" date="2007-10" db="UniProtKB">
        <title>Shotgun proteomic analysis of total and membrane protein extracts of S. aureus strain N315.</title>
        <authorList>
            <person name="Vaezzadeh A.R."/>
            <person name="Deshusses J."/>
            <person name="Lescuyer P."/>
            <person name="Hochstrasser D.F."/>
        </authorList>
    </citation>
    <scope>IDENTIFICATION BY MASS SPECTROMETRY [LARGE SCALE ANALYSIS]</scope>
    <source>
        <strain>N315</strain>
    </source>
</reference>